<dbReference type="EMBL" id="L42374">
    <property type="protein sequence ID" value="AAC37602.1"/>
    <property type="molecule type" value="mRNA"/>
</dbReference>
<dbReference type="EMBL" id="Z69028">
    <property type="protein sequence ID" value="CAA93152.1"/>
    <property type="molecule type" value="mRNA"/>
</dbReference>
<dbReference type="EMBL" id="BC045619">
    <property type="protein sequence ID" value="AAH45619.1"/>
    <property type="molecule type" value="mRNA"/>
</dbReference>
<dbReference type="CCDS" id="CCDS8085.1">
    <molecule id="Q15173-1"/>
</dbReference>
<dbReference type="PIR" id="I70147">
    <property type="entry name" value="I70147"/>
</dbReference>
<dbReference type="RefSeq" id="NP_006235.1">
    <molecule id="Q15173-1"/>
    <property type="nucleotide sequence ID" value="NM_006244.4"/>
</dbReference>
<dbReference type="RefSeq" id="XP_047283155.1">
    <molecule id="Q15173-1"/>
    <property type="nucleotide sequence ID" value="XM_047427199.1"/>
</dbReference>
<dbReference type="RefSeq" id="XP_054225226.1">
    <molecule id="Q15173-1"/>
    <property type="nucleotide sequence ID" value="XM_054369251.1"/>
</dbReference>
<dbReference type="SMR" id="Q15173"/>
<dbReference type="BioGRID" id="111518">
    <property type="interactions" value="47"/>
</dbReference>
<dbReference type="ELM" id="Q15173"/>
<dbReference type="FunCoup" id="Q15173">
    <property type="interactions" value="1407"/>
</dbReference>
<dbReference type="IntAct" id="Q15173">
    <property type="interactions" value="27"/>
</dbReference>
<dbReference type="MINT" id="Q15173"/>
<dbReference type="STRING" id="9606.ENSP00000164133"/>
<dbReference type="iPTMnet" id="Q15173"/>
<dbReference type="PhosphoSitePlus" id="Q15173"/>
<dbReference type="BioMuta" id="PPP2R5B"/>
<dbReference type="DMDM" id="7387497"/>
<dbReference type="jPOST" id="Q15173"/>
<dbReference type="MassIVE" id="Q15173"/>
<dbReference type="PaxDb" id="9606-ENSP00000164133"/>
<dbReference type="PeptideAtlas" id="Q15173"/>
<dbReference type="ProteomicsDB" id="60483"/>
<dbReference type="ProteomicsDB" id="60484">
    <molecule id="Q15173-2"/>
</dbReference>
<dbReference type="Pumba" id="Q15173"/>
<dbReference type="TopDownProteomics" id="Q15173-1">
    <molecule id="Q15173-1"/>
</dbReference>
<dbReference type="Antibodypedia" id="29566">
    <property type="antibodies" value="107 antibodies from 28 providers"/>
</dbReference>
<dbReference type="DNASU" id="5526"/>
<dbReference type="Ensembl" id="ENST00000164133.7">
    <molecule id="Q15173-1"/>
    <property type="protein sequence ID" value="ENSP00000164133.2"/>
    <property type="gene ID" value="ENSG00000068971.14"/>
</dbReference>
<dbReference type="GeneID" id="5526"/>
<dbReference type="KEGG" id="hsa:5526"/>
<dbReference type="MANE-Select" id="ENST00000164133.7">
    <property type="protein sequence ID" value="ENSP00000164133.2"/>
    <property type="RefSeq nucleotide sequence ID" value="NM_006244.4"/>
    <property type="RefSeq protein sequence ID" value="NP_006235.1"/>
</dbReference>
<dbReference type="UCSC" id="uc001oby.4">
    <molecule id="Q15173-1"/>
    <property type="organism name" value="human"/>
</dbReference>
<dbReference type="AGR" id="HGNC:9310"/>
<dbReference type="CTD" id="5526"/>
<dbReference type="DisGeNET" id="5526"/>
<dbReference type="GeneCards" id="PPP2R5B"/>
<dbReference type="HGNC" id="HGNC:9310">
    <property type="gene designation" value="PPP2R5B"/>
</dbReference>
<dbReference type="HPA" id="ENSG00000068971">
    <property type="expression patterns" value="Tissue enriched (brain)"/>
</dbReference>
<dbReference type="MalaCards" id="PPP2R5B"/>
<dbReference type="MIM" id="601644">
    <property type="type" value="gene"/>
</dbReference>
<dbReference type="neXtProt" id="NX_Q15173"/>
<dbReference type="OpenTargets" id="ENSG00000068971"/>
<dbReference type="PharmGKB" id="PA33673"/>
<dbReference type="VEuPathDB" id="HostDB:ENSG00000068971"/>
<dbReference type="eggNOG" id="KOG2085">
    <property type="taxonomic scope" value="Eukaryota"/>
</dbReference>
<dbReference type="GeneTree" id="ENSGT01030000234620"/>
<dbReference type="HOGENOM" id="CLU_012437_4_0_1"/>
<dbReference type="InParanoid" id="Q15173"/>
<dbReference type="OMA" id="QDRRMQM"/>
<dbReference type="OrthoDB" id="10264446at2759"/>
<dbReference type="PAN-GO" id="Q15173">
    <property type="GO annotations" value="5 GO annotations based on evolutionary models"/>
</dbReference>
<dbReference type="PhylomeDB" id="Q15173"/>
<dbReference type="TreeFam" id="TF105556"/>
<dbReference type="PathwayCommons" id="Q15173"/>
<dbReference type="Reactome" id="R-HSA-141444">
    <property type="pathway name" value="Amplification of signal from unattached kinetochores via a MAD2 inhibitory signal"/>
</dbReference>
<dbReference type="Reactome" id="R-HSA-195253">
    <property type="pathway name" value="Degradation of beta-catenin by the destruction complex"/>
</dbReference>
<dbReference type="Reactome" id="R-HSA-196299">
    <property type="pathway name" value="Beta-catenin phosphorylation cascade"/>
</dbReference>
<dbReference type="Reactome" id="R-HSA-2467813">
    <property type="pathway name" value="Separation of Sister Chromatids"/>
</dbReference>
<dbReference type="Reactome" id="R-HSA-2500257">
    <property type="pathway name" value="Resolution of Sister Chromatid Cohesion"/>
</dbReference>
<dbReference type="Reactome" id="R-HSA-381038">
    <property type="pathway name" value="XBP1(S) activates chaperone genes"/>
</dbReference>
<dbReference type="Reactome" id="R-HSA-389356">
    <property type="pathway name" value="Co-stimulation by CD28"/>
</dbReference>
<dbReference type="Reactome" id="R-HSA-389513">
    <property type="pathway name" value="Co-inhibition by CTLA4"/>
</dbReference>
<dbReference type="Reactome" id="R-HSA-432142">
    <property type="pathway name" value="Platelet sensitization by LDL"/>
</dbReference>
<dbReference type="Reactome" id="R-HSA-4641262">
    <property type="pathway name" value="Disassembly of the destruction complex and recruitment of AXIN to the membrane"/>
</dbReference>
<dbReference type="Reactome" id="R-HSA-5339716">
    <property type="pathway name" value="Signaling by GSK3beta mutants"/>
</dbReference>
<dbReference type="Reactome" id="R-HSA-5358747">
    <property type="pathway name" value="CTNNB1 S33 mutants aren't phosphorylated"/>
</dbReference>
<dbReference type="Reactome" id="R-HSA-5358749">
    <property type="pathway name" value="CTNNB1 S37 mutants aren't phosphorylated"/>
</dbReference>
<dbReference type="Reactome" id="R-HSA-5358751">
    <property type="pathway name" value="CTNNB1 S45 mutants aren't phosphorylated"/>
</dbReference>
<dbReference type="Reactome" id="R-HSA-5358752">
    <property type="pathway name" value="CTNNB1 T41 mutants aren't phosphorylated"/>
</dbReference>
<dbReference type="Reactome" id="R-HSA-5467337">
    <property type="pathway name" value="APC truncation mutants have impaired AXIN binding"/>
</dbReference>
<dbReference type="Reactome" id="R-HSA-5467340">
    <property type="pathway name" value="AXIN missense mutants destabilize the destruction complex"/>
</dbReference>
<dbReference type="Reactome" id="R-HSA-5467348">
    <property type="pathway name" value="Truncations of AMER1 destabilize the destruction complex"/>
</dbReference>
<dbReference type="Reactome" id="R-HSA-5663220">
    <property type="pathway name" value="RHO GTPases Activate Formins"/>
</dbReference>
<dbReference type="Reactome" id="R-HSA-5673000">
    <property type="pathway name" value="RAF activation"/>
</dbReference>
<dbReference type="Reactome" id="R-HSA-5675221">
    <property type="pathway name" value="Negative regulation of MAPK pathway"/>
</dbReference>
<dbReference type="Reactome" id="R-HSA-6811558">
    <property type="pathway name" value="PI5P, PP2A and IER3 Regulate PI3K/AKT Signaling"/>
</dbReference>
<dbReference type="Reactome" id="R-HSA-68877">
    <property type="pathway name" value="Mitotic Prometaphase"/>
</dbReference>
<dbReference type="Reactome" id="R-HSA-9648025">
    <property type="pathway name" value="EML4 and NUDC in mitotic spindle formation"/>
</dbReference>
<dbReference type="SignaLink" id="Q15173"/>
<dbReference type="SIGNOR" id="Q15173"/>
<dbReference type="BioGRID-ORCS" id="5526">
    <property type="hits" value="30 hits in 1160 CRISPR screens"/>
</dbReference>
<dbReference type="ChiTaRS" id="PPP2R5B">
    <property type="organism name" value="human"/>
</dbReference>
<dbReference type="GeneWiki" id="PPP2R5B"/>
<dbReference type="GenomeRNAi" id="5526"/>
<dbReference type="Pharos" id="Q15173">
    <property type="development level" value="Tbio"/>
</dbReference>
<dbReference type="PRO" id="PR:Q15173"/>
<dbReference type="Proteomes" id="UP000005640">
    <property type="component" value="Chromosome 11"/>
</dbReference>
<dbReference type="RNAct" id="Q15173">
    <property type="molecule type" value="protein"/>
</dbReference>
<dbReference type="Bgee" id="ENSG00000068971">
    <property type="expression patterns" value="Expressed in right hemisphere of cerebellum and 183 other cell types or tissues"/>
</dbReference>
<dbReference type="ExpressionAtlas" id="Q15173">
    <property type="expression patterns" value="baseline and differential"/>
</dbReference>
<dbReference type="GO" id="GO:0005737">
    <property type="term" value="C:cytoplasm"/>
    <property type="evidence" value="ECO:0000304"/>
    <property type="project" value="ProtInc"/>
</dbReference>
<dbReference type="GO" id="GO:0005829">
    <property type="term" value="C:cytosol"/>
    <property type="evidence" value="ECO:0000318"/>
    <property type="project" value="GO_Central"/>
</dbReference>
<dbReference type="GO" id="GO:0005634">
    <property type="term" value="C:nucleus"/>
    <property type="evidence" value="ECO:0000318"/>
    <property type="project" value="GO_Central"/>
</dbReference>
<dbReference type="GO" id="GO:0000159">
    <property type="term" value="C:protein phosphatase type 2A complex"/>
    <property type="evidence" value="ECO:0000318"/>
    <property type="project" value="GO_Central"/>
</dbReference>
<dbReference type="GO" id="GO:0072542">
    <property type="term" value="F:protein phosphatase activator activity"/>
    <property type="evidence" value="ECO:0000318"/>
    <property type="project" value="GO_Central"/>
</dbReference>
<dbReference type="GO" id="GO:0019888">
    <property type="term" value="F:protein phosphatase regulator activity"/>
    <property type="evidence" value="ECO:0000304"/>
    <property type="project" value="ProtInc"/>
</dbReference>
<dbReference type="GO" id="GO:0071363">
    <property type="term" value="P:cellular response to growth factor stimulus"/>
    <property type="evidence" value="ECO:0007669"/>
    <property type="project" value="Ensembl"/>
</dbReference>
<dbReference type="GO" id="GO:0070317">
    <property type="term" value="P:negative regulation of G0 to G1 transition"/>
    <property type="evidence" value="ECO:0007669"/>
    <property type="project" value="Ensembl"/>
</dbReference>
<dbReference type="GO" id="GO:0010976">
    <property type="term" value="P:positive regulation of neuron projection development"/>
    <property type="evidence" value="ECO:0007669"/>
    <property type="project" value="Ensembl"/>
</dbReference>
<dbReference type="GO" id="GO:0051388">
    <property type="term" value="P:positive regulation of neurotrophin TRK receptor signaling pathway"/>
    <property type="evidence" value="ECO:0007669"/>
    <property type="project" value="Ensembl"/>
</dbReference>
<dbReference type="GO" id="GO:0031334">
    <property type="term" value="P:positive regulation of protein-containing complex assembly"/>
    <property type="evidence" value="ECO:0007669"/>
    <property type="project" value="Ensembl"/>
</dbReference>
<dbReference type="GO" id="GO:0045944">
    <property type="term" value="P:positive regulation of transcription by RNA polymerase II"/>
    <property type="evidence" value="ECO:0007669"/>
    <property type="project" value="Ensembl"/>
</dbReference>
<dbReference type="GO" id="GO:0007165">
    <property type="term" value="P:signal transduction"/>
    <property type="evidence" value="ECO:0007669"/>
    <property type="project" value="InterPro"/>
</dbReference>
<dbReference type="FunFam" id="1.25.10.10:FF:000010">
    <property type="entry name" value="Serine/threonine-protein phosphatase 2A 56 kDa regulatory subunit"/>
    <property type="match status" value="1"/>
</dbReference>
<dbReference type="Gene3D" id="1.25.10.10">
    <property type="entry name" value="Leucine-rich Repeat Variant"/>
    <property type="match status" value="1"/>
</dbReference>
<dbReference type="InterPro" id="IPR011989">
    <property type="entry name" value="ARM-like"/>
</dbReference>
<dbReference type="InterPro" id="IPR016024">
    <property type="entry name" value="ARM-type_fold"/>
</dbReference>
<dbReference type="InterPro" id="IPR002554">
    <property type="entry name" value="PP2A_B56"/>
</dbReference>
<dbReference type="PANTHER" id="PTHR10257">
    <property type="entry name" value="SERINE/THREONINE PROTEIN PHOSPHATASE 2A PP2A REGULATORY SUBUNIT B"/>
    <property type="match status" value="1"/>
</dbReference>
<dbReference type="PANTHER" id="PTHR10257:SF4">
    <property type="entry name" value="SERINE_THREONINE-PROTEIN PHOSPHATASE 2A 56 KDA REGULATORY SUBUNIT BETA ISOFORM"/>
    <property type="match status" value="1"/>
</dbReference>
<dbReference type="Pfam" id="PF01603">
    <property type="entry name" value="B56"/>
    <property type="match status" value="1"/>
</dbReference>
<dbReference type="PIRSF" id="PIRSF028043">
    <property type="entry name" value="PP2A_B56"/>
    <property type="match status" value="1"/>
</dbReference>
<dbReference type="SUPFAM" id="SSF48371">
    <property type="entry name" value="ARM repeat"/>
    <property type="match status" value="1"/>
</dbReference>
<proteinExistence type="evidence at protein level"/>
<keyword id="KW-0025">Alternative splicing</keyword>
<keyword id="KW-0963">Cytoplasm</keyword>
<keyword id="KW-0903">Direct protein sequencing</keyword>
<keyword id="KW-0597">Phosphoprotein</keyword>
<keyword id="KW-1267">Proteomics identification</keyword>
<keyword id="KW-1185">Reference proteome</keyword>
<keyword id="KW-0832">Ubl conjugation</keyword>
<organism>
    <name type="scientific">Homo sapiens</name>
    <name type="common">Human</name>
    <dbReference type="NCBI Taxonomy" id="9606"/>
    <lineage>
        <taxon>Eukaryota</taxon>
        <taxon>Metazoa</taxon>
        <taxon>Chordata</taxon>
        <taxon>Craniata</taxon>
        <taxon>Vertebrata</taxon>
        <taxon>Euteleostomi</taxon>
        <taxon>Mammalia</taxon>
        <taxon>Eutheria</taxon>
        <taxon>Euarchontoglires</taxon>
        <taxon>Primates</taxon>
        <taxon>Haplorrhini</taxon>
        <taxon>Catarrhini</taxon>
        <taxon>Hominidae</taxon>
        <taxon>Homo</taxon>
    </lineage>
</organism>
<name>2A5B_HUMAN</name>
<protein>
    <recommendedName>
        <fullName>Serine/threonine-protein phosphatase 2A 56 kDa regulatory subunit beta isoform</fullName>
    </recommendedName>
    <alternativeName>
        <fullName>PP2A B subunit isoform B'-beta</fullName>
    </alternativeName>
    <alternativeName>
        <fullName>PP2A B subunit isoform B56-beta</fullName>
    </alternativeName>
    <alternativeName>
        <fullName>PP2A B subunit isoform PR61-beta</fullName>
    </alternativeName>
    <alternativeName>
        <fullName>PP2A B subunit isoform R5-beta</fullName>
    </alternativeName>
</protein>
<comment type="function">
    <text evidence="3">As the regulatory component of the serine/threonine-protein phosphatase 2A (PP2A) holoenzyme, modulates substrate specificity, subcellular localization, and responsiveness to phosphorylation. The phosphorylated form mediates the interaction between PP2A and AKT1, leading to AKT1 dephosphorylation.</text>
</comment>
<comment type="subunit">
    <text evidence="2 3 4">Component of the serine/threonine-protein phosphatase 2A complex (PP2A). This complex consists of a common heterodimeric core enzyme, composed of a 36 kDa catalytic subunit (subunit C) and a 65 kDa constant scaffold subunit (PR65 or subunit A), that associates with a variety of regulatory subunits. Proteins that associate with the core dimer include three families of regulatory subunits B (the R2/B/PR55/B55, R3/B''/PR72/PR130/PR59 and R5/B'/B56 families), the 48 kDa variable regulatory subunit, viral proteins, and cell signaling molecules (PubMed:23135275). Interacts with SGO1 (PubMed:16541025). Interacts with AKT1 (PubMed:21329884). Interacts with CUL3 and KLHL15; this interaction leads to proteasomal degradation (PubMed:23135275).</text>
</comment>
<comment type="interaction">
    <interactant intactId="EBI-1369497">
        <id>Q15173</id>
    </interactant>
    <interactant intactId="EBI-1180783">
        <id>O96017</id>
        <label>CHEK2</label>
    </interactant>
    <organismsDiffer>false</organismsDiffer>
    <experiments>2</experiments>
</comment>
<comment type="interaction">
    <interactant intactId="EBI-1369497">
        <id>Q15173</id>
    </interactant>
    <interactant intactId="EBI-1748945">
        <id>P46695</id>
        <label>IER3</label>
    </interactant>
    <organismsDiffer>false</organismsDiffer>
    <experiments>4</experiments>
</comment>
<comment type="interaction">
    <interactant intactId="EBI-1369497">
        <id>Q15173</id>
    </interactant>
    <interactant intactId="EBI-712311">
        <id>P67775</id>
        <label>PPP2CA</label>
    </interactant>
    <organismsDiffer>false</organismsDiffer>
    <experiments>8</experiments>
</comment>
<comment type="interaction">
    <interactant intactId="EBI-1369497">
        <id>Q15173</id>
    </interactant>
    <interactant intactId="EBI-302388">
        <id>P30153</id>
        <label>PPP2R1A</label>
    </interactant>
    <organismsDiffer>false</organismsDiffer>
    <experiments>6</experiments>
</comment>
<comment type="subcellular location">
    <subcellularLocation>
        <location evidence="5">Cytoplasm</location>
    </subcellularLocation>
</comment>
<comment type="alternative products">
    <event type="alternative splicing"/>
    <isoform>
        <id>Q15173-1</id>
        <name>Beta-1</name>
        <sequence type="displayed"/>
    </isoform>
    <isoform>
        <id>Q15173-2</id>
        <name>Beta-2</name>
        <sequence type="described" ref="VSP_005109"/>
    </isoform>
</comment>
<comment type="tissue specificity">
    <text>Highest expression in brain.</text>
</comment>
<comment type="induction">
    <text>By retinoic acid; in neuroblastoma cell lines.</text>
</comment>
<comment type="PTM">
    <text evidence="4">Ubiquitinated by E3 CUL3-KLHL15 complex; this modification leads to proteasomal degradation.</text>
</comment>
<comment type="similarity">
    <text evidence="7">Belongs to the phosphatase 2A regulatory subunit B56 family.</text>
</comment>
<sequence>METKLPPASTPTSPSSPGLSPVPPPDKVDGFSRRSLRRARPRRSHSSSQFRYQSNQQELTPLPLLKDVPASELHELLSRKLAQCGVMFDFLDCVADLKGKEVKRAALNELVECVGSTRGVLIEPVYPDIIRMISVNIFRTLPPSENPEFDPEEDEPNLEPSWPHLQLVYEFFLRFLESPDFQPSVAKRYVDQKFVLMLLELFDSEDPREREYLKTILHRVYGKFLGLRAYIRKQCNHIFLRFIYEFEHFNGVAELLEILGSIINGFALPLKTEHKQFLVRVLIPLHSVKSLSVFHAQLAYCVVQFLEKDATLTEHVIRGLLKYWPKTCTQKEVMFLGEMEEILDVIEPSQFVKIQEPLFKQVARCVSSPHFQVAERALYFWNNEYILSLIEDNCHTVLPAVFGTLYQVSKEHWNQTIVSLIYNVLKTFMEMNGKLFDELTASYKLEKQQEQQKAQERQELWQGLEELRLRRLQGTQGAKEAPLQRLTPQVAASGGQS</sequence>
<reference key="1">
    <citation type="journal article" date="1995" name="J. Biol. Chem.">
        <title>Identification of a new family of protein phosphatase 2A regulatory subunits.</title>
        <authorList>
            <person name="McCright B."/>
            <person name="Virshup D.M."/>
        </authorList>
    </citation>
    <scope>NUCLEOTIDE SEQUENCE [MRNA] (ISOFORM BETA-1)</scope>
    <source>
        <tissue>Fetal brain</tissue>
    </source>
</reference>
<reference key="2">
    <citation type="journal article" date="1996" name="Biochem. J.">
        <title>The variable subunit associated with protein phosphatase 2A0 defines a novel multimember family of regulatory subunits.</title>
        <authorList>
            <person name="Zolnierowicz S."/>
            <person name="van Hoof C."/>
            <person name="Andjelkovic N."/>
            <person name="Cron P."/>
            <person name="Stevens I."/>
            <person name="Merlevede W."/>
            <person name="Goris J."/>
            <person name="Hemmings B.A."/>
        </authorList>
    </citation>
    <scope>NUCLEOTIDE SEQUENCE [MRNA] (ISOFORM BETA-2)</scope>
    <scope>PARTIAL PROTEIN SEQUENCE</scope>
    <source>
        <tissue>Brain</tissue>
    </source>
</reference>
<reference key="3">
    <citation type="journal article" date="2004" name="Genome Res.">
        <title>The status, quality, and expansion of the NIH full-length cDNA project: the Mammalian Gene Collection (MGC).</title>
        <authorList>
            <consortium name="The MGC Project Team"/>
        </authorList>
    </citation>
    <scope>NUCLEOTIDE SEQUENCE [LARGE SCALE MRNA] (ISOFORM BETA-1)</scope>
    <source>
        <tissue>Brain</tissue>
    </source>
</reference>
<reference key="4">
    <citation type="journal article" date="1996" name="J. Biol. Chem.">
        <title>The B56 family of protein phosphatase 2A (PP2A) regulatory subunits encodes differentiation-induced phosphoproteins that target PP2A to both nucleus and cytoplasm.</title>
        <authorList>
            <person name="McCright B."/>
            <person name="Rivers A.M."/>
            <person name="Audlin S."/>
            <person name="Virshup D.M."/>
        </authorList>
    </citation>
    <scope>PHOSPHORYLATION</scope>
    <scope>SUBCELLULAR LOCATION</scope>
</reference>
<reference key="5">
    <citation type="journal article" date="2006" name="Nature">
        <title>Shugoshin collaborates with protein phosphatase 2A to protect cohesin.</title>
        <authorList>
            <person name="Kitajima T.S."/>
            <person name="Sakuno T."/>
            <person name="Ishiguro K."/>
            <person name="Iemura S."/>
            <person name="Natsume T."/>
            <person name="Kawashima S.A."/>
            <person name="Watanabe Y."/>
        </authorList>
    </citation>
    <scope>INTERACTION WITH SGO1</scope>
</reference>
<reference key="6">
    <citation type="journal article" date="2011" name="Mol. Cell">
        <title>Clk2 and B56-beta mediate insulin-regulated assembly of the PP2A phosphatase holoenzyme complex on Akt.</title>
        <authorList>
            <person name="Rodgers J.T."/>
            <person name="Vogel R.O."/>
            <person name="Puigserver P."/>
        </authorList>
    </citation>
    <scope>FUNCTION</scope>
    <scope>PHOSPHORYLATION AT SER-32; SER-35; SER-44; SER-46; SER-47 AND SER-48</scope>
    <scope>INTERACTION WITH AKT1</scope>
</reference>
<reference key="7">
    <citation type="journal article" date="2012" name="J. Biol. Chem.">
        <title>Selective proteasomal degradation of the B'beta subunit of protein phosphatase 2A by the E3 ubiquitin ligase adaptor Kelch-like 15.</title>
        <authorList>
            <person name="Oberg E.A."/>
            <person name="Nifoussi S.K."/>
            <person name="Gingras A.C."/>
            <person name="Strack S."/>
        </authorList>
    </citation>
    <scope>INTERACTION WITH CUL3 AND KLHL15</scope>
    <scope>IDENTIFICATION IN PP2A COMPLEX</scope>
    <scope>UBIQUITINATION</scope>
    <scope>MUTAGENESIS OF TYR-52; 103-LYS-ARG-104 AND 232-ARG-LYS-233</scope>
</reference>
<reference key="8">
    <citation type="journal article" date="2013" name="J. Proteome Res.">
        <title>Toward a comprehensive characterization of a human cancer cell phosphoproteome.</title>
        <authorList>
            <person name="Zhou H."/>
            <person name="Di Palma S."/>
            <person name="Preisinger C."/>
            <person name="Peng M."/>
            <person name="Polat A.N."/>
            <person name="Heck A.J."/>
            <person name="Mohammed S."/>
        </authorList>
    </citation>
    <scope>IDENTIFICATION BY MASS SPECTROMETRY [LARGE SCALE ANALYSIS]</scope>
    <source>
        <tissue>Erythroleukemia</tissue>
    </source>
</reference>
<accession>Q15173</accession>
<accession>Q13853</accession>
<evidence type="ECO:0000256" key="1">
    <source>
        <dbReference type="SAM" id="MobiDB-lite"/>
    </source>
</evidence>
<evidence type="ECO:0000269" key="2">
    <source>
    </source>
</evidence>
<evidence type="ECO:0000269" key="3">
    <source>
    </source>
</evidence>
<evidence type="ECO:0000269" key="4">
    <source>
    </source>
</evidence>
<evidence type="ECO:0000269" key="5">
    <source>
    </source>
</evidence>
<evidence type="ECO:0000303" key="6">
    <source>
    </source>
</evidence>
<evidence type="ECO:0000305" key="7"/>
<evidence type="ECO:0000305" key="8">
    <source>
    </source>
</evidence>
<gene>
    <name type="primary">PPP2R5B</name>
</gene>
<feature type="chain" id="PRO_0000071450" description="Serine/threonine-protein phosphatase 2A 56 kDa regulatory subunit beta isoform">
    <location>
        <begin position="1"/>
        <end position="497"/>
    </location>
</feature>
<feature type="region of interest" description="Disordered" evidence="1">
    <location>
        <begin position="1"/>
        <end position="55"/>
    </location>
</feature>
<feature type="region of interest" description="Disordered" evidence="1">
    <location>
        <begin position="475"/>
        <end position="497"/>
    </location>
</feature>
<feature type="compositionally biased region" description="Low complexity" evidence="1">
    <location>
        <begin position="1"/>
        <end position="19"/>
    </location>
</feature>
<feature type="compositionally biased region" description="Basic residues" evidence="1">
    <location>
        <begin position="34"/>
        <end position="45"/>
    </location>
</feature>
<feature type="modified residue" description="Phosphoserine; by CLK2" evidence="8">
    <location>
        <position position="32"/>
    </location>
</feature>
<feature type="modified residue" description="Phosphoserine; by CLK2" evidence="8">
    <location>
        <position position="35"/>
    </location>
</feature>
<feature type="modified residue" description="Phosphoserine; by CLK2" evidence="8">
    <location>
        <position position="44"/>
    </location>
</feature>
<feature type="modified residue" description="Phosphoserine; by CLK2" evidence="8">
    <location>
        <position position="46"/>
    </location>
</feature>
<feature type="modified residue" description="Phosphoserine; by CLK2" evidence="8">
    <location>
        <position position="47"/>
    </location>
</feature>
<feature type="modified residue" description="Phosphoserine; by CLK2" evidence="8">
    <location>
        <position position="48"/>
    </location>
</feature>
<feature type="splice variant" id="VSP_005109" description="In isoform Beta-2." evidence="6">
    <original>METKLPPASTPTSPSSPGL</original>
    <variation>MITVNPPLPQDTVNLF</variation>
    <location>
        <begin position="1"/>
        <end position="19"/>
    </location>
</feature>
<feature type="mutagenesis site" description="Loss of KLHL15-binding and enhanced stability." evidence="4">
    <original>Y</original>
    <variation>S</variation>
    <location>
        <position position="52"/>
    </location>
</feature>
<feature type="mutagenesis site" description="Impaired trimer formation with PP2A subunits A/C, no effect on KLHL15-binding." evidence="4">
    <original>KR</original>
    <variation>DE</variation>
    <location>
        <begin position="103"/>
        <end position="104"/>
    </location>
</feature>
<feature type="mutagenesis site" description="Impaired trimer formation with PP2A subunits A/C, no effect on KLHL15-binding." evidence="4">
    <original>RK</original>
    <variation>ED</variation>
    <location>
        <begin position="232"/>
        <end position="233"/>
    </location>
</feature>
<feature type="sequence conflict" description="In Ref. 2; AA sequence." evidence="7" ref="2">
    <original>QE</original>
    <variation>IF</variation>
    <location>
        <begin position="57"/>
        <end position="58"/>
    </location>
</feature>
<feature type="sequence conflict" description="In Ref. 2; AA sequence." evidence="7" ref="2">
    <original>ES</original>
    <variation>GA</variation>
    <location>
        <begin position="177"/>
        <end position="178"/>
    </location>
</feature>
<feature type="sequence conflict" description="In Ref. 2; AA sequence." evidence="7" ref="2">
    <original>F</original>
    <variation>M</variation>
    <location>
        <position position="181"/>
    </location>
</feature>
<feature type="sequence conflict" description="In Ref. 2; AA sequence." evidence="7" ref="2">
    <original>S</original>
    <variation>M</variation>
    <location>
        <position position="184"/>
    </location>
</feature>
<feature type="sequence conflict" description="In Ref. 2; AA sequence." evidence="7" ref="2">
    <original>W</original>
    <variation>E</variation>
    <location>
        <position position="461"/>
    </location>
</feature>